<keyword id="KW-0067">ATP-binding</keyword>
<keyword id="KW-0227">DNA damage</keyword>
<keyword id="KW-0234">DNA repair</keyword>
<keyword id="KW-0238">DNA-binding</keyword>
<keyword id="KW-0269">Exonuclease</keyword>
<keyword id="KW-0347">Helicase</keyword>
<keyword id="KW-0378">Hydrolase</keyword>
<keyword id="KW-0413">Isomerase</keyword>
<keyword id="KW-0540">Nuclease</keyword>
<keyword id="KW-0547">Nucleotide-binding</keyword>
<keyword id="KW-1185">Reference proteome</keyword>
<name>ADDA_ACET2</name>
<comment type="function">
    <text evidence="1">The heterodimer acts as both an ATP-dependent DNA helicase and an ATP-dependent, dual-direction single-stranded exonuclease. Recognizes the chi site generating a DNA molecule suitable for the initiation of homologous recombination. The AddA nuclease domain is required for chi fragment generation; this subunit has the helicase and 3' -&gt; 5' nuclease activities.</text>
</comment>
<comment type="catalytic activity">
    <reaction evidence="1">
        <text>Couples ATP hydrolysis with the unwinding of duplex DNA by translocating in the 3'-5' direction.</text>
        <dbReference type="EC" id="5.6.2.4"/>
    </reaction>
</comment>
<comment type="catalytic activity">
    <reaction evidence="1">
        <text>ATP + H2O = ADP + phosphate + H(+)</text>
        <dbReference type="Rhea" id="RHEA:13065"/>
        <dbReference type="ChEBI" id="CHEBI:15377"/>
        <dbReference type="ChEBI" id="CHEBI:15378"/>
        <dbReference type="ChEBI" id="CHEBI:30616"/>
        <dbReference type="ChEBI" id="CHEBI:43474"/>
        <dbReference type="ChEBI" id="CHEBI:456216"/>
        <dbReference type="EC" id="5.6.2.4"/>
    </reaction>
</comment>
<comment type="cofactor">
    <cofactor evidence="1">
        <name>Mg(2+)</name>
        <dbReference type="ChEBI" id="CHEBI:18420"/>
    </cofactor>
</comment>
<comment type="subunit">
    <text evidence="1">Heterodimer of AddA and AddB/RexB.</text>
</comment>
<comment type="similarity">
    <text evidence="1">Belongs to the helicase family. AddA subfamily.</text>
</comment>
<evidence type="ECO:0000255" key="1">
    <source>
        <dbReference type="HAMAP-Rule" id="MF_01451"/>
    </source>
</evidence>
<evidence type="ECO:0000256" key="2">
    <source>
        <dbReference type="SAM" id="MobiDB-lite"/>
    </source>
</evidence>
<accession>A3DH19</accession>
<organism>
    <name type="scientific">Acetivibrio thermocellus (strain ATCC 27405 / DSM 1237 / JCM 9322 / NBRC 103400 / NCIMB 10682 / NRRL B-4536 / VPI 7372)</name>
    <name type="common">Clostridium thermocellum</name>
    <dbReference type="NCBI Taxonomy" id="203119"/>
    <lineage>
        <taxon>Bacteria</taxon>
        <taxon>Bacillati</taxon>
        <taxon>Bacillota</taxon>
        <taxon>Clostridia</taxon>
        <taxon>Eubacteriales</taxon>
        <taxon>Oscillospiraceae</taxon>
        <taxon>Acetivibrio</taxon>
    </lineage>
</organism>
<reference key="1">
    <citation type="submission" date="2007-02" db="EMBL/GenBank/DDBJ databases">
        <title>Complete sequence of Clostridium thermocellum ATCC 27405.</title>
        <authorList>
            <consortium name="US DOE Joint Genome Institute"/>
            <person name="Copeland A."/>
            <person name="Lucas S."/>
            <person name="Lapidus A."/>
            <person name="Barry K."/>
            <person name="Detter J.C."/>
            <person name="Glavina del Rio T."/>
            <person name="Hammon N."/>
            <person name="Israni S."/>
            <person name="Dalin E."/>
            <person name="Tice H."/>
            <person name="Pitluck S."/>
            <person name="Chertkov O."/>
            <person name="Brettin T."/>
            <person name="Bruce D."/>
            <person name="Han C."/>
            <person name="Tapia R."/>
            <person name="Gilna P."/>
            <person name="Schmutz J."/>
            <person name="Larimer F."/>
            <person name="Land M."/>
            <person name="Hauser L."/>
            <person name="Kyrpides N."/>
            <person name="Mikhailova N."/>
            <person name="Wu J.H.D."/>
            <person name="Newcomb M."/>
            <person name="Richardson P."/>
        </authorList>
    </citation>
    <scope>NUCLEOTIDE SEQUENCE [LARGE SCALE GENOMIC DNA]</scope>
    <source>
        <strain>ATCC 27405 / DSM 1237 / JCM 9322 / NBRC 103400 / NCIMB 10682 / NRRL B-4536 / VPI 7372</strain>
    </source>
</reference>
<protein>
    <recommendedName>
        <fullName evidence="1">ATP-dependent helicase/nuclease subunit A</fullName>
        <ecNumber evidence="1">3.1.-.-</ecNumber>
        <ecNumber evidence="1">5.6.2.4</ecNumber>
    </recommendedName>
    <alternativeName>
        <fullName evidence="1">ATP-dependent helicase/nuclease AddA</fullName>
    </alternativeName>
    <alternativeName>
        <fullName evidence="1">DNA 3'-5' helicase AddA</fullName>
    </alternativeName>
</protein>
<feature type="chain" id="PRO_0000379265" description="ATP-dependent helicase/nuclease subunit A">
    <location>
        <begin position="1"/>
        <end position="1251"/>
    </location>
</feature>
<feature type="domain" description="UvrD-like helicase ATP-binding" evidence="1">
    <location>
        <begin position="5"/>
        <end position="481"/>
    </location>
</feature>
<feature type="domain" description="UvrD-like helicase C-terminal" evidence="1">
    <location>
        <begin position="526"/>
        <end position="824"/>
    </location>
</feature>
<feature type="region of interest" description="Disordered" evidence="2">
    <location>
        <begin position="544"/>
        <end position="565"/>
    </location>
</feature>
<feature type="binding site" evidence="1">
    <location>
        <begin position="26"/>
        <end position="33"/>
    </location>
    <ligand>
        <name>ATP</name>
        <dbReference type="ChEBI" id="CHEBI:30616"/>
    </ligand>
</feature>
<proteinExistence type="inferred from homology"/>
<gene>
    <name evidence="1" type="primary">addA</name>
    <name type="ordered locus">Cthe_2039</name>
</gene>
<dbReference type="EC" id="3.1.-.-" evidence="1"/>
<dbReference type="EC" id="5.6.2.4" evidence="1"/>
<dbReference type="EMBL" id="CP000568">
    <property type="protein sequence ID" value="ABN53248.1"/>
    <property type="molecule type" value="Genomic_DNA"/>
</dbReference>
<dbReference type="RefSeq" id="WP_020457694.1">
    <property type="nucleotide sequence ID" value="NC_009012.1"/>
</dbReference>
<dbReference type="SMR" id="A3DH19"/>
<dbReference type="STRING" id="203119.Cthe_2039"/>
<dbReference type="GeneID" id="35803648"/>
<dbReference type="KEGG" id="cth:Cthe_2039"/>
<dbReference type="eggNOG" id="COG1074">
    <property type="taxonomic scope" value="Bacteria"/>
</dbReference>
<dbReference type="HOGENOM" id="CLU_001114_3_1_9"/>
<dbReference type="OrthoDB" id="9810135at2"/>
<dbReference type="Proteomes" id="UP000002145">
    <property type="component" value="Chromosome"/>
</dbReference>
<dbReference type="GO" id="GO:0005829">
    <property type="term" value="C:cytosol"/>
    <property type="evidence" value="ECO:0007669"/>
    <property type="project" value="TreeGrafter"/>
</dbReference>
<dbReference type="GO" id="GO:0033202">
    <property type="term" value="C:DNA helicase complex"/>
    <property type="evidence" value="ECO:0007669"/>
    <property type="project" value="TreeGrafter"/>
</dbReference>
<dbReference type="GO" id="GO:0043138">
    <property type="term" value="F:3'-5' DNA helicase activity"/>
    <property type="evidence" value="ECO:0007669"/>
    <property type="project" value="UniProtKB-UniRule"/>
</dbReference>
<dbReference type="GO" id="GO:0008408">
    <property type="term" value="F:3'-5' exonuclease activity"/>
    <property type="evidence" value="ECO:0007669"/>
    <property type="project" value="UniProtKB-UniRule"/>
</dbReference>
<dbReference type="GO" id="GO:0005524">
    <property type="term" value="F:ATP binding"/>
    <property type="evidence" value="ECO:0007669"/>
    <property type="project" value="UniProtKB-UniRule"/>
</dbReference>
<dbReference type="GO" id="GO:0016887">
    <property type="term" value="F:ATP hydrolysis activity"/>
    <property type="evidence" value="ECO:0007669"/>
    <property type="project" value="RHEA"/>
</dbReference>
<dbReference type="GO" id="GO:0003690">
    <property type="term" value="F:double-stranded DNA binding"/>
    <property type="evidence" value="ECO:0007669"/>
    <property type="project" value="UniProtKB-UniRule"/>
</dbReference>
<dbReference type="GO" id="GO:0000724">
    <property type="term" value="P:double-strand break repair via homologous recombination"/>
    <property type="evidence" value="ECO:0007669"/>
    <property type="project" value="UniProtKB-UniRule"/>
</dbReference>
<dbReference type="FunFam" id="3.40.50.300:FF:001236">
    <property type="entry name" value="ATP-dependent helicase/nuclease subunit A"/>
    <property type="match status" value="1"/>
</dbReference>
<dbReference type="Gene3D" id="1.10.274.50">
    <property type="match status" value="1"/>
</dbReference>
<dbReference type="Gene3D" id="3.90.320.10">
    <property type="match status" value="1"/>
</dbReference>
<dbReference type="Gene3D" id="3.40.50.300">
    <property type="entry name" value="P-loop containing nucleotide triphosphate hydrolases"/>
    <property type="match status" value="4"/>
</dbReference>
<dbReference type="HAMAP" id="MF_01451">
    <property type="entry name" value="AddA"/>
    <property type="match status" value="1"/>
</dbReference>
<dbReference type="InterPro" id="IPR014152">
    <property type="entry name" value="AddA"/>
</dbReference>
<dbReference type="InterPro" id="IPR014017">
    <property type="entry name" value="DNA_helicase_UvrD-like_C"/>
</dbReference>
<dbReference type="InterPro" id="IPR000212">
    <property type="entry name" value="DNA_helicase_UvrD/REP"/>
</dbReference>
<dbReference type="InterPro" id="IPR027417">
    <property type="entry name" value="P-loop_NTPase"/>
</dbReference>
<dbReference type="InterPro" id="IPR011604">
    <property type="entry name" value="PDDEXK-like_dom_sf"/>
</dbReference>
<dbReference type="InterPro" id="IPR038726">
    <property type="entry name" value="PDDEXK_AddAB-type"/>
</dbReference>
<dbReference type="InterPro" id="IPR011335">
    <property type="entry name" value="Restrct_endonuc-II-like"/>
</dbReference>
<dbReference type="InterPro" id="IPR014016">
    <property type="entry name" value="UvrD-like_ATP-bd"/>
</dbReference>
<dbReference type="NCBIfam" id="TIGR02785">
    <property type="entry name" value="addA_Gpos"/>
    <property type="match status" value="1"/>
</dbReference>
<dbReference type="PANTHER" id="PTHR11070:SF48">
    <property type="entry name" value="ATP-DEPENDENT HELICASE_NUCLEASE SUBUNIT A"/>
    <property type="match status" value="1"/>
</dbReference>
<dbReference type="PANTHER" id="PTHR11070">
    <property type="entry name" value="UVRD / RECB / PCRA DNA HELICASE FAMILY MEMBER"/>
    <property type="match status" value="1"/>
</dbReference>
<dbReference type="Pfam" id="PF12705">
    <property type="entry name" value="PDDEXK_1"/>
    <property type="match status" value="1"/>
</dbReference>
<dbReference type="Pfam" id="PF00580">
    <property type="entry name" value="UvrD-helicase"/>
    <property type="match status" value="1"/>
</dbReference>
<dbReference type="Pfam" id="PF13361">
    <property type="entry name" value="UvrD_C"/>
    <property type="match status" value="1"/>
</dbReference>
<dbReference type="SUPFAM" id="SSF52540">
    <property type="entry name" value="P-loop containing nucleoside triphosphate hydrolases"/>
    <property type="match status" value="1"/>
</dbReference>
<dbReference type="SUPFAM" id="SSF52980">
    <property type="entry name" value="Restriction endonuclease-like"/>
    <property type="match status" value="1"/>
</dbReference>
<dbReference type="PROSITE" id="PS51198">
    <property type="entry name" value="UVRD_HELICASE_ATP_BIND"/>
    <property type="match status" value="1"/>
</dbReference>
<dbReference type="PROSITE" id="PS51217">
    <property type="entry name" value="UVRD_HELICASE_CTER"/>
    <property type="match status" value="1"/>
</dbReference>
<sequence length="1251" mass="143346">MSERTKWTDEQWEAITGNEKSLLVSAAAGAGKTAVLVERIIRKITDEENPVDIDRLLVVTFTNAAATEMRERIAQAISEKLEENPGSANIQRQLTLLGKACITTIHSFCLEVIRSNFQQINIDPGFRIADETESRLMKLEALDEVFEEQYENENEDFFELLECYGGNRDDRALQDMVLNLYDFIQSSPWPEEWLEKMTESMNIPDGTDFGKTLWGSVLLSSVKIELEGLKEMISRALEILKDASGLEKYRAVYMEDLANVDALLKLLNEESEMQWDRIFNALQGFEFATLPRCGREVDKDKQEIVKKIRDDVKQRIRKFREKVITSVSNEIISDLKALYPKMKCLANLVKQLAEKYAEKKNRKSVVDFNDLEHFCLEILTERKEDGSIIPSRTAISYRERFAEILVDEYQDSNLVQETIINMISKGDDASPGVFMVGDVKQSIYRFRQARPELFLEKYNTYLPDKGSPCRKIILSRNFRSRREVIDAVNFLFKQIMSTGAGELDYTDAEALNFGAVFDENAKEDITVGGEVEFHLIQTEDEDKNFTFENEGEEGRQADEGEEDEEMLDSIQCEARLVGRRILELMKPDENGRYFSVFDKAKNEYRRVEYRDVVILLRTTRNWAEVFVDELSVMGIPVFADTGTGFFKTVEVQVMLSLLQIIDNPLQDIPLLSVLRSPIVGFTTDELAELRLVDKKALLFDALKKLAESGQGEAAGKASAFLENLQKWREMSLYMSTDRLLWQLYNDTGYYSIVGAMPAGEQRQANLRILYERARQFEETSYKGLFNFINFIDKLKSSRGDMGSAKILSENDNVVRIMSIHKSKGLEFPVVIVAGCGKKFNLQDMNKSILLHHELGFGPDVVDHKLRLSWPSVAKQAIREKIKAETLSEEMRILYVALTRAREKLVITGAVKNVRKAVEKWLDSASVQKSRLSAYDMLSGANYLDWIGPALLRHKNCGGLRDCVGSAGFRGLLIDDPSVWSVKIWNKTDVQSSGVSEEQGESEFIKWLDSLEKEEPSEYAEETARRLSWSYPYVKASKVPAKVSVTELKRRYNEVVSEDVMQFPDYMPVLVKKPMFLEEKKGLTYAEKGTILHFVMQHLDYGREDIEAQIEEMVAKDLLTPQQAQSVDAARIRRFLNSPLGKRMLASKSINREVPFNIEIPCHELYRDMEDEACHGETLLLQGVVDCYFEEPDGIVLVDYKTDYVAPGNVETIRERYKVQILYYARALEMLTGKKVKEKYIYLFWDGRILGF</sequence>